<gene>
    <name evidence="8" type="primary">Gpam</name>
    <name evidence="2" type="synonym">Gpat1</name>
</gene>
<reference key="1">
    <citation type="journal article" date="1999" name="Biochim. Biophys. Acta">
        <title>Rat sn-glycerol-3-phosphate acyltransferase: molecular cloning and characterization of the cDNA and expressed protein.</title>
        <authorList>
            <person name="Bhat B.G."/>
            <person name="Wang P."/>
            <person name="Kim J.-H."/>
            <person name="Black T.M."/>
            <person name="Lewin T.M."/>
            <person name="Fiedorek F.T. Jr."/>
            <person name="Coleman R.A."/>
        </authorList>
    </citation>
    <scope>NUCLEOTIDE SEQUENCE [MRNA]</scope>
    <scope>CATALYTIC ACTIVITY</scope>
    <scope>FUNCTION</scope>
    <source>
        <tissue>Liver</tissue>
    </source>
</reference>
<reference key="2">
    <citation type="journal article" date="2000" name="J. Biol. Chem.">
        <title>Identification of two transmembrane regions and a cytosolic domain of rat mitochondrial glycerophosphate acyltransferase.</title>
        <authorList>
            <person name="Balija V.S."/>
            <person name="Chakraborty T.R."/>
            <person name="Nikonov A.V."/>
            <person name="Morimoto T."/>
            <person name="Haldar D."/>
        </authorList>
    </citation>
    <scope>NUCLEOTIDE SEQUENCE [MRNA]</scope>
    <scope>SUBCELLULAR LOCATION</scope>
    <scope>TOPOLOGY</scope>
    <source>
        <strain>Sprague-Dawley</strain>
        <tissue>Liver</tissue>
    </source>
</reference>
<reference key="3">
    <citation type="journal article" date="2006" name="Proc. Natl. Acad. Sci. U.S.A.">
        <title>Quantitative phosphoproteomics of vasopressin-sensitive renal cells: regulation of aquaporin-2 phosphorylation at two sites.</title>
        <authorList>
            <person name="Hoffert J.D."/>
            <person name="Pisitkun T."/>
            <person name="Wang G."/>
            <person name="Shen R.-F."/>
            <person name="Knepper M.A."/>
        </authorList>
    </citation>
    <scope>PHOSPHORYLATION [LARGE SCALE ANALYSIS] AT SER-380</scope>
    <scope>IDENTIFICATION BY MASS SPECTROMETRY [LARGE SCALE ANALYSIS]</scope>
</reference>
<reference key="4">
    <citation type="journal article" date="2012" name="PLoS ONE">
        <title>Glycerol-3-phosphate acyltransferase-2 is expressed in spermatic germ cells and incorporates arachidonic acid into triacylglycerols.</title>
        <authorList>
            <person name="Cattaneo E.R."/>
            <person name="Pellon-Maison M."/>
            <person name="Rabassa M.E."/>
            <person name="Lacunza E."/>
            <person name="Coleman R.A."/>
            <person name="Gonzalez-Baro M.R."/>
        </authorList>
    </citation>
    <scope>CATALYTIC ACTIVITY</scope>
    <scope>FUNCTION</scope>
</reference>
<reference key="5">
    <citation type="journal article" date="2012" name="Nat. Commun.">
        <title>Quantitative maps of protein phosphorylation sites across 14 different rat organs and tissues.</title>
        <authorList>
            <person name="Lundby A."/>
            <person name="Secher A."/>
            <person name="Lage K."/>
            <person name="Nordsborg N.B."/>
            <person name="Dmytriyev A."/>
            <person name="Lundby C."/>
            <person name="Olsen J.V."/>
        </authorList>
    </citation>
    <scope>PHOSPHORYLATION [LARGE SCALE ANALYSIS] AT SER-688 AND SER-695</scope>
    <scope>IDENTIFICATION BY MASS SPECTROMETRY [LARGE SCALE ANALYSIS]</scope>
</reference>
<sequence>MEESSVTIGTIDVSYLPNSSEYSLGRCKHTNEDWVDCGFKPTFFRSATLKWKESLMSRKRPFVGRCCYSCTPQSWERFFNPSIPSLGLRNVIYINETHTRHRGWLARRLSYILFVQERDVHKGMFATSITDNVLNSSRVQEAIAEVAAELNPDGSAQQQSKAIQKVKRKARKILQEMVATVSPGMIRLTGWVLLKLFNSFFWNIQIHKGQLEMVKAATETNLPLLFLPVHRSHIDYLLLTFILFCHNIKAPYIASGNNLNIPIFSTLIHKLGGFFIRRRLDETPDGRKDILYRALLHGHIVELLRQQQFLEIFLEGTRSRSGKTSCARAGLLSVVVDTLSSNTIPDILVIPVGISYDRIIEGHYNGEQLGKPKKNESLWSVARGVIRMLRKNYGYVRVDFAQPFSLKEYLEGQSQKPVSAPLSLEQALLPAILPSRPDAAAAEHEDMSSNESRNAADEAFRRRLIANLAEHILFTASKSCAIMSTHIVACLLLYRHRQGIHLSTLVEDFFVMKEEVLARDFDLGFSGNSEDVVMHAIQLLGNCVTITHTSRKDEFFITPSTTVPSVFELNFYSNGVLHVFIMEAIIACSIYAVQNKRGSGGSAGGLGNLISQEQLVRKAASLCYLLSNEGTISLPCQTFYQVCQETVGKFIQYGILTVAEQDDQEDVSPGLAEQQWNKKLPEPLNWRSDEEDEDSDFGEEQRDCYLKVSQAKEHQQFITFLQRLLGPLLEAYSSAAIFVHTFRGPVPESEYLQKLHRYLLTRTERNVAVYAESATYCLVKNAVKMFKDIGVFKETKQKRASVLELSTTFLPQGSRQKLLEYILSFVVL</sequence>
<feature type="chain" id="PRO_0000024692" description="Glycerol-3-phosphate acyltransferase 1, mitochondrial">
    <location>
        <begin position="1"/>
        <end position="828"/>
    </location>
</feature>
<feature type="topological domain" description="Cytoplasmic" evidence="2">
    <location>
        <begin position="1"/>
        <end position="87"/>
    </location>
</feature>
<feature type="intramembrane region" evidence="2">
    <location>
        <begin position="88"/>
        <end position="118"/>
    </location>
</feature>
<feature type="topological domain" description="Cytoplasmic" evidence="2">
    <location>
        <begin position="119"/>
        <end position="828"/>
    </location>
</feature>
<feature type="region of interest" description="Important for mitochondrial localization" evidence="2">
    <location>
        <begin position="80"/>
        <end position="120"/>
    </location>
</feature>
<feature type="short sequence motif" description="HXXXXD motif" evidence="2">
    <location>
        <begin position="230"/>
        <end position="235"/>
    </location>
</feature>
<feature type="binding site" evidence="2">
    <location>
        <position position="278"/>
    </location>
    <ligand>
        <name>CoA</name>
        <dbReference type="ChEBI" id="CHEBI:57287"/>
    </ligand>
</feature>
<feature type="binding site" evidence="2">
    <location>
        <position position="279"/>
    </location>
    <ligand>
        <name>CoA</name>
        <dbReference type="ChEBI" id="CHEBI:57287"/>
    </ligand>
</feature>
<feature type="binding site" evidence="2">
    <location>
        <position position="288"/>
    </location>
    <ligand>
        <name>CoA</name>
        <dbReference type="ChEBI" id="CHEBI:57287"/>
    </ligand>
</feature>
<feature type="binding site" evidence="2">
    <location>
        <position position="293"/>
    </location>
    <ligand>
        <name>CoA</name>
        <dbReference type="ChEBI" id="CHEBI:57287"/>
    </ligand>
</feature>
<feature type="binding site" evidence="2">
    <location>
        <position position="328"/>
    </location>
    <ligand>
        <name>CoA</name>
        <dbReference type="ChEBI" id="CHEBI:57287"/>
    </ligand>
</feature>
<feature type="binding site" evidence="2">
    <location>
        <position position="462"/>
    </location>
    <ligand>
        <name>CoA</name>
        <dbReference type="ChEBI" id="CHEBI:57287"/>
    </ligand>
</feature>
<feature type="modified residue" description="Phosphoserine" evidence="9">
    <location>
        <position position="380"/>
    </location>
</feature>
<feature type="modified residue" description="Phosphoserine" evidence="10">
    <location>
        <position position="688"/>
    </location>
</feature>
<feature type="modified residue" description="Phosphoserine" evidence="10">
    <location>
        <position position="695"/>
    </location>
</feature>
<feature type="modified residue" description="N6-acetyllysine" evidence="1">
    <location>
        <position position="780"/>
    </location>
</feature>
<feature type="modified residue" description="N6-acetyllysine" evidence="1">
    <location>
        <position position="784"/>
    </location>
</feature>
<feature type="sequence conflict" description="In Ref. 2." evidence="6" ref="2">
    <original>C</original>
    <variation>F</variation>
    <location>
        <position position="37"/>
    </location>
</feature>
<feature type="sequence conflict" description="In Ref. 2; AAB39470." evidence="6" ref="2">
    <original>S</original>
    <variation>P</variation>
    <location>
        <position position="85"/>
    </location>
</feature>
<feature type="sequence conflict" description="In Ref. 2; AAB39470." evidence="6" ref="2">
    <original>I</original>
    <variation>V</variation>
    <location>
        <position position="300"/>
    </location>
</feature>
<feature type="sequence conflict" description="In Ref. 2; AAB39470." evidence="6" ref="2">
    <original>L</original>
    <variation>V</variation>
    <location>
        <position position="331"/>
    </location>
</feature>
<feature type="sequence conflict" description="In Ref. 2; AAB39470." evidence="6" ref="2">
    <original>ILF</original>
    <variation>NLL</variation>
    <location>
        <begin position="472"/>
        <end position="474"/>
    </location>
</feature>
<feature type="sequence conflict" description="In Ref. 2; AAB39470." evidence="6" ref="2">
    <original>R</original>
    <variation>W</variation>
    <location>
        <position position="497"/>
    </location>
</feature>
<feature type="sequence conflict" description="In Ref. 2; AAB39470." evidence="6" ref="2">
    <original>SAGGL</original>
    <variation>LPEP</variation>
    <location>
        <begin position="602"/>
        <end position="606"/>
    </location>
</feature>
<feature type="sequence conflict" description="In Ref. 2; AAB39470." evidence="6" ref="2">
    <original>Q</original>
    <variation>H</variation>
    <location>
        <position position="644"/>
    </location>
</feature>
<feature type="sequence conflict" description="In Ref. 2; AAB39470." evidence="6" ref="2">
    <original>G</original>
    <variation>A</variation>
    <location>
        <position position="744"/>
    </location>
</feature>
<keyword id="KW-0007">Acetylation</keyword>
<keyword id="KW-0012">Acyltransferase</keyword>
<keyword id="KW-0444">Lipid biosynthesis</keyword>
<keyword id="KW-0443">Lipid metabolism</keyword>
<keyword id="KW-0472">Membrane</keyword>
<keyword id="KW-0496">Mitochondrion</keyword>
<keyword id="KW-1000">Mitochondrion outer membrane</keyword>
<keyword id="KW-0594">Phospholipid biosynthesis</keyword>
<keyword id="KW-1208">Phospholipid metabolism</keyword>
<keyword id="KW-0597">Phosphoprotein</keyword>
<keyword id="KW-1185">Reference proteome</keyword>
<keyword id="KW-0808">Transferase</keyword>
<accession>P97564</accession>
<accession>O35349</accession>
<accession>P97565</accession>
<accession>P97566</accession>
<evidence type="ECO:0000250" key="1">
    <source>
        <dbReference type="UniProtKB" id="Q61586"/>
    </source>
</evidence>
<evidence type="ECO:0000250" key="2">
    <source>
        <dbReference type="UniProtKB" id="Q9HCL2"/>
    </source>
</evidence>
<evidence type="ECO:0000269" key="3">
    <source>
    </source>
</evidence>
<evidence type="ECO:0000269" key="4">
    <source>
    </source>
</evidence>
<evidence type="ECO:0000269" key="5">
    <source>
    </source>
</evidence>
<evidence type="ECO:0000305" key="6"/>
<evidence type="ECO:0000305" key="7">
    <source>
    </source>
</evidence>
<evidence type="ECO:0000312" key="8">
    <source>
        <dbReference type="RGD" id="61847"/>
    </source>
</evidence>
<evidence type="ECO:0007744" key="9">
    <source>
    </source>
</evidence>
<evidence type="ECO:0007744" key="10">
    <source>
    </source>
</evidence>
<organism>
    <name type="scientific">Rattus norvegicus</name>
    <name type="common">Rat</name>
    <dbReference type="NCBI Taxonomy" id="10116"/>
    <lineage>
        <taxon>Eukaryota</taxon>
        <taxon>Metazoa</taxon>
        <taxon>Chordata</taxon>
        <taxon>Craniata</taxon>
        <taxon>Vertebrata</taxon>
        <taxon>Euteleostomi</taxon>
        <taxon>Mammalia</taxon>
        <taxon>Eutheria</taxon>
        <taxon>Euarchontoglires</taxon>
        <taxon>Glires</taxon>
        <taxon>Rodentia</taxon>
        <taxon>Myomorpha</taxon>
        <taxon>Muroidea</taxon>
        <taxon>Muridae</taxon>
        <taxon>Murinae</taxon>
        <taxon>Rattus</taxon>
    </lineage>
</organism>
<dbReference type="EC" id="2.3.1.15" evidence="3"/>
<dbReference type="EMBL" id="AF021348">
    <property type="protein sequence ID" value="AAB71605.1"/>
    <property type="molecule type" value="mRNA"/>
</dbReference>
<dbReference type="EMBL" id="U36771">
    <property type="protein sequence ID" value="AAB39470.2"/>
    <property type="status" value="ALT_INIT"/>
    <property type="molecule type" value="mRNA"/>
</dbReference>
<dbReference type="RefSeq" id="NP_058970.1">
    <property type="nucleotide sequence ID" value="NM_017274.1"/>
</dbReference>
<dbReference type="SMR" id="P97564"/>
<dbReference type="FunCoup" id="P97564">
    <property type="interactions" value="1202"/>
</dbReference>
<dbReference type="STRING" id="10116.ENSRNOP00000069320"/>
<dbReference type="SwissLipids" id="SLP:000000284"/>
<dbReference type="iPTMnet" id="P97564"/>
<dbReference type="PhosphoSitePlus" id="P97564"/>
<dbReference type="jPOST" id="P97564"/>
<dbReference type="PaxDb" id="10116-ENSRNOP00000050050"/>
<dbReference type="GeneID" id="29653"/>
<dbReference type="KEGG" id="rno:29653"/>
<dbReference type="UCSC" id="RGD:61847">
    <property type="organism name" value="rat"/>
</dbReference>
<dbReference type="AGR" id="RGD:61847"/>
<dbReference type="CTD" id="57678"/>
<dbReference type="RGD" id="61847">
    <property type="gene designation" value="Gpam"/>
</dbReference>
<dbReference type="eggNOG" id="KOG3729">
    <property type="taxonomic scope" value="Eukaryota"/>
</dbReference>
<dbReference type="InParanoid" id="P97564"/>
<dbReference type="PhylomeDB" id="P97564"/>
<dbReference type="BRENDA" id="2.3.1.15">
    <property type="organism ID" value="5301"/>
</dbReference>
<dbReference type="Reactome" id="R-RNO-1483166">
    <property type="pathway name" value="Synthesis of PA"/>
</dbReference>
<dbReference type="Reactome" id="R-RNO-75109">
    <property type="pathway name" value="Triglyceride biosynthesis"/>
</dbReference>
<dbReference type="SABIO-RK" id="P97564"/>
<dbReference type="UniPathway" id="UPA00557">
    <property type="reaction ID" value="UER00612"/>
</dbReference>
<dbReference type="PRO" id="PR:P97564"/>
<dbReference type="Proteomes" id="UP000002494">
    <property type="component" value="Unplaced"/>
</dbReference>
<dbReference type="GO" id="GO:0031966">
    <property type="term" value="C:mitochondrial membrane"/>
    <property type="evidence" value="ECO:0000314"/>
    <property type="project" value="RGD"/>
</dbReference>
<dbReference type="GO" id="GO:0005741">
    <property type="term" value="C:mitochondrial outer membrane"/>
    <property type="evidence" value="ECO:0000314"/>
    <property type="project" value="RGD"/>
</dbReference>
<dbReference type="GO" id="GO:0005739">
    <property type="term" value="C:mitochondrion"/>
    <property type="evidence" value="ECO:0000266"/>
    <property type="project" value="RGD"/>
</dbReference>
<dbReference type="GO" id="GO:0005886">
    <property type="term" value="C:plasma membrane"/>
    <property type="evidence" value="ECO:0007669"/>
    <property type="project" value="InterPro"/>
</dbReference>
<dbReference type="GO" id="GO:0004366">
    <property type="term" value="F:glycerol-3-phosphate O-acyltransferase activity"/>
    <property type="evidence" value="ECO:0000314"/>
    <property type="project" value="RGD"/>
</dbReference>
<dbReference type="GO" id="GO:0050798">
    <property type="term" value="P:activated T cell proliferation"/>
    <property type="evidence" value="ECO:0000266"/>
    <property type="project" value="RGD"/>
</dbReference>
<dbReference type="GO" id="GO:0006924">
    <property type="term" value="P:activation-induced cell death of T cells"/>
    <property type="evidence" value="ECO:0000266"/>
    <property type="project" value="RGD"/>
</dbReference>
<dbReference type="GO" id="GO:0006637">
    <property type="term" value="P:acyl-CoA metabolic process"/>
    <property type="evidence" value="ECO:0000266"/>
    <property type="project" value="RGD"/>
</dbReference>
<dbReference type="GO" id="GO:0016024">
    <property type="term" value="P:CDP-diacylglycerol biosynthetic process"/>
    <property type="evidence" value="ECO:0007669"/>
    <property type="project" value="UniProtKB-UniPathway"/>
</dbReference>
<dbReference type="GO" id="GO:0032869">
    <property type="term" value="P:cellular response to insulin stimulus"/>
    <property type="evidence" value="ECO:0000314"/>
    <property type="project" value="RGD"/>
</dbReference>
<dbReference type="GO" id="GO:0051607">
    <property type="term" value="P:defense response to virus"/>
    <property type="evidence" value="ECO:0000266"/>
    <property type="project" value="RGD"/>
</dbReference>
<dbReference type="GO" id="GO:0006651">
    <property type="term" value="P:diacylglycerol biosynthetic process"/>
    <property type="evidence" value="ECO:0000315"/>
    <property type="project" value="UniProtKB"/>
</dbReference>
<dbReference type="GO" id="GO:0055089">
    <property type="term" value="P:fatty acid homeostasis"/>
    <property type="evidence" value="ECO:0000266"/>
    <property type="project" value="RGD"/>
</dbReference>
<dbReference type="GO" id="GO:0006631">
    <property type="term" value="P:fatty acid metabolic process"/>
    <property type="evidence" value="ECO:0000266"/>
    <property type="project" value="RGD"/>
</dbReference>
<dbReference type="GO" id="GO:0006650">
    <property type="term" value="P:glycerophospholipid metabolic process"/>
    <property type="evidence" value="ECO:0000266"/>
    <property type="project" value="RGD"/>
</dbReference>
<dbReference type="GO" id="GO:0070236">
    <property type="term" value="P:negative regulation of activation-induced cell death of T cells"/>
    <property type="evidence" value="ECO:0000266"/>
    <property type="project" value="RGD"/>
</dbReference>
<dbReference type="GO" id="GO:0006654">
    <property type="term" value="P:phosphatidic acid biosynthetic process"/>
    <property type="evidence" value="ECO:0000315"/>
    <property type="project" value="UniProtKB"/>
</dbReference>
<dbReference type="GO" id="GO:0006655">
    <property type="term" value="P:phosphatidylglycerol biosynthetic process"/>
    <property type="evidence" value="ECO:0000250"/>
    <property type="project" value="UniProtKB"/>
</dbReference>
<dbReference type="GO" id="GO:0055091">
    <property type="term" value="P:phospholipid homeostasis"/>
    <property type="evidence" value="ECO:0000266"/>
    <property type="project" value="RGD"/>
</dbReference>
<dbReference type="GO" id="GO:0042104">
    <property type="term" value="P:positive regulation of activated T cell proliferation"/>
    <property type="evidence" value="ECO:0000266"/>
    <property type="project" value="RGD"/>
</dbReference>
<dbReference type="GO" id="GO:0040018">
    <property type="term" value="P:positive regulation of multicellular organism growth"/>
    <property type="evidence" value="ECO:0000266"/>
    <property type="project" value="RGD"/>
</dbReference>
<dbReference type="GO" id="GO:0010867">
    <property type="term" value="P:positive regulation of triglyceride biosynthetic process"/>
    <property type="evidence" value="ECO:0000314"/>
    <property type="project" value="RGD"/>
</dbReference>
<dbReference type="GO" id="GO:0001817">
    <property type="term" value="P:regulation of cytokine production"/>
    <property type="evidence" value="ECO:0000266"/>
    <property type="project" value="RGD"/>
</dbReference>
<dbReference type="GO" id="GO:0014823">
    <property type="term" value="P:response to activity"/>
    <property type="evidence" value="ECO:0000314"/>
    <property type="project" value="RGD"/>
</dbReference>
<dbReference type="GO" id="GO:0046686">
    <property type="term" value="P:response to cadmium ion"/>
    <property type="evidence" value="ECO:0000270"/>
    <property type="project" value="RGD"/>
</dbReference>
<dbReference type="GO" id="GO:0009750">
    <property type="term" value="P:response to fructose"/>
    <property type="evidence" value="ECO:0000270"/>
    <property type="project" value="RGD"/>
</dbReference>
<dbReference type="GO" id="GO:0009749">
    <property type="term" value="P:response to glucose"/>
    <property type="evidence" value="ECO:0000266"/>
    <property type="project" value="RGD"/>
</dbReference>
<dbReference type="GO" id="GO:0007584">
    <property type="term" value="P:response to nutrient"/>
    <property type="evidence" value="ECO:0000270"/>
    <property type="project" value="RGD"/>
</dbReference>
<dbReference type="GO" id="GO:0031667">
    <property type="term" value="P:response to nutrient levels"/>
    <property type="evidence" value="ECO:0000270"/>
    <property type="project" value="RGD"/>
</dbReference>
<dbReference type="GO" id="GO:0019432">
    <property type="term" value="P:triglyceride biosynthetic process"/>
    <property type="evidence" value="ECO:0000266"/>
    <property type="project" value="RGD"/>
</dbReference>
<dbReference type="GO" id="GO:0006641">
    <property type="term" value="P:triglyceride metabolic process"/>
    <property type="evidence" value="ECO:0000266"/>
    <property type="project" value="RGD"/>
</dbReference>
<dbReference type="CDD" id="cd07993">
    <property type="entry name" value="LPLAT_DHAPAT-like"/>
    <property type="match status" value="1"/>
</dbReference>
<dbReference type="InterPro" id="IPR022284">
    <property type="entry name" value="GPAT/DHAPAT"/>
</dbReference>
<dbReference type="InterPro" id="IPR045520">
    <property type="entry name" value="GPAT/DHAPAT_C"/>
</dbReference>
<dbReference type="InterPro" id="IPR041728">
    <property type="entry name" value="GPAT/DHAPAT_LPLAT"/>
</dbReference>
<dbReference type="InterPro" id="IPR028354">
    <property type="entry name" value="GPAT_PlsB"/>
</dbReference>
<dbReference type="InterPro" id="IPR002123">
    <property type="entry name" value="Plipid/glycerol_acylTrfase"/>
</dbReference>
<dbReference type="PANTHER" id="PTHR12563">
    <property type="entry name" value="GLYCEROL-3-PHOSPHATE ACYLTRANSFERASE"/>
    <property type="match status" value="1"/>
</dbReference>
<dbReference type="PANTHER" id="PTHR12563:SF16">
    <property type="entry name" value="GLYCEROL-3-PHOSPHATE ACYLTRANSFERASE 1, MITOCHONDRIAL"/>
    <property type="match status" value="1"/>
</dbReference>
<dbReference type="Pfam" id="PF01553">
    <property type="entry name" value="Acyltransferase"/>
    <property type="match status" value="1"/>
</dbReference>
<dbReference type="Pfam" id="PF19277">
    <property type="entry name" value="GPAT_C"/>
    <property type="match status" value="1"/>
</dbReference>
<dbReference type="PIRSF" id="PIRSF500064">
    <property type="entry name" value="GPAT"/>
    <property type="match status" value="1"/>
</dbReference>
<dbReference type="PIRSF" id="PIRSF000437">
    <property type="entry name" value="GPAT_DHAPAT"/>
    <property type="match status" value="1"/>
</dbReference>
<dbReference type="SMART" id="SM00563">
    <property type="entry name" value="PlsC"/>
    <property type="match status" value="1"/>
</dbReference>
<dbReference type="SUPFAM" id="SSF69593">
    <property type="entry name" value="Glycerol-3-phosphate (1)-acyltransferase"/>
    <property type="match status" value="1"/>
</dbReference>
<proteinExistence type="evidence at protein level"/>
<comment type="function">
    <text evidence="2 3 5">Mitochondrial membrane protein that catalyzes the essential first step of biosynthesis of glycerolipids such as triglycerides, phosphatidic acids and lysophosphatidic acids (PubMed:10446428, PubMed:22905194). Esterifies acyl-group from acyl-coenzyme A (acyl-CoA) to the sn-1 position of glycerol-3-phosphate, to produce lysophosphatidic acid (PubMed:10446428, PubMed:22905194). Has a narrow hydrophobic binding cleft that selects for a linear acyl chain (By similarity). Catalytic activity is higher for substrates with a 16-carbon acyl chain (By similarity).</text>
</comment>
<comment type="catalytic activity">
    <reaction evidence="3">
        <text>sn-glycerol 3-phosphate + an acyl-CoA = a 1-acyl-sn-glycero-3-phosphate + CoA</text>
        <dbReference type="Rhea" id="RHEA:15325"/>
        <dbReference type="ChEBI" id="CHEBI:57287"/>
        <dbReference type="ChEBI" id="CHEBI:57597"/>
        <dbReference type="ChEBI" id="CHEBI:57970"/>
        <dbReference type="ChEBI" id="CHEBI:58342"/>
        <dbReference type="EC" id="2.3.1.15"/>
    </reaction>
</comment>
<comment type="catalytic activity">
    <reaction evidence="5">
        <text>sn-glycerol 3-phosphate + hexadecanoyl-CoA = 1-hexadecanoyl-sn-glycero-3-phosphate + CoA</text>
        <dbReference type="Rhea" id="RHEA:35723"/>
        <dbReference type="ChEBI" id="CHEBI:57287"/>
        <dbReference type="ChEBI" id="CHEBI:57379"/>
        <dbReference type="ChEBI" id="CHEBI:57518"/>
        <dbReference type="ChEBI" id="CHEBI:57597"/>
    </reaction>
    <physiologicalReaction direction="left-to-right" evidence="7">
        <dbReference type="Rhea" id="RHEA:35724"/>
    </physiologicalReaction>
</comment>
<comment type="catalytic activity">
    <reaction evidence="2">
        <text>(9Z,12Z)-octadecadienoyl-CoA + sn-glycerol 3-phosphate = 1-(9Z,12Z)-octadecadienoyl-sn-glycero-3-phosphate + CoA</text>
        <dbReference type="Rhea" id="RHEA:37203"/>
        <dbReference type="ChEBI" id="CHEBI:57287"/>
        <dbReference type="ChEBI" id="CHEBI:57383"/>
        <dbReference type="ChEBI" id="CHEBI:57597"/>
        <dbReference type="ChEBI" id="CHEBI:74547"/>
    </reaction>
    <physiologicalReaction direction="left-to-right" evidence="2">
        <dbReference type="Rhea" id="RHEA:37204"/>
    </physiologicalReaction>
</comment>
<comment type="catalytic activity">
    <reaction evidence="2">
        <text>sn-glycerol 3-phosphate + (9Z)-octadecenoyl-CoA = 1-(9Z-octadecenoyl)-sn-glycero-3-phosphate + CoA</text>
        <dbReference type="Rhea" id="RHEA:37199"/>
        <dbReference type="ChEBI" id="CHEBI:57287"/>
        <dbReference type="ChEBI" id="CHEBI:57387"/>
        <dbReference type="ChEBI" id="CHEBI:57597"/>
        <dbReference type="ChEBI" id="CHEBI:74544"/>
    </reaction>
    <physiologicalReaction direction="left-to-right" evidence="2">
        <dbReference type="Rhea" id="RHEA:37200"/>
    </physiologicalReaction>
</comment>
<comment type="catalytic activity">
    <reaction evidence="2">
        <text>sn-glycerol 3-phosphate + octadecanoyl-CoA = 1-octadecanoyl-sn-glycero-3-phosphate + CoA</text>
        <dbReference type="Rhea" id="RHEA:37195"/>
        <dbReference type="ChEBI" id="CHEBI:57287"/>
        <dbReference type="ChEBI" id="CHEBI:57394"/>
        <dbReference type="ChEBI" id="CHEBI:57597"/>
        <dbReference type="ChEBI" id="CHEBI:74565"/>
    </reaction>
    <physiologicalReaction direction="left-to-right" evidence="2">
        <dbReference type="Rhea" id="RHEA:37196"/>
    </physiologicalReaction>
</comment>
<comment type="catalytic activity">
    <reaction evidence="2">
        <text>dodecanoyl-CoA + sn-glycerol 3-phosphate = 1-dodecanoyl-sn-glycerol 3-phosphate + CoA</text>
        <dbReference type="Rhea" id="RHEA:35727"/>
        <dbReference type="ChEBI" id="CHEBI:57287"/>
        <dbReference type="ChEBI" id="CHEBI:57375"/>
        <dbReference type="ChEBI" id="CHEBI:57597"/>
        <dbReference type="ChEBI" id="CHEBI:72682"/>
    </reaction>
    <physiologicalReaction direction="left-to-right" evidence="2">
        <dbReference type="Rhea" id="RHEA:35728"/>
    </physiologicalReaction>
</comment>
<comment type="catalytic activity">
    <reaction evidence="2">
        <text>1-acyl-sn-glycero-3-phospho-(1'-sn-glycerol) + an acyl-CoA = a 1,2-diacyl-sn-glycero-3-phospho-(1'-sn-glycerol) + CoA</text>
        <dbReference type="Rhea" id="RHEA:33203"/>
        <dbReference type="ChEBI" id="CHEBI:57287"/>
        <dbReference type="ChEBI" id="CHEBI:58342"/>
        <dbReference type="ChEBI" id="CHEBI:64716"/>
        <dbReference type="ChEBI" id="CHEBI:64840"/>
    </reaction>
    <physiologicalReaction direction="left-to-right" evidence="2">
        <dbReference type="Rhea" id="RHEA:33204"/>
    </physiologicalReaction>
</comment>
<comment type="pathway">
    <text evidence="3">Phospholipid metabolism; CDP-diacylglycerol biosynthesis; CDP-diacylglycerol from sn-glycerol 3-phosphate: step 1/3.</text>
</comment>
<comment type="subcellular location">
    <subcellularLocation>
        <location evidence="4">Mitochondrion outer membrane</location>
        <topology evidence="2">Peripheral membrane protein</topology>
    </subcellularLocation>
    <text evidence="2">Associated with the mitochondrion outer membrane of hepatic cells via a patch of basic residues.</text>
</comment>
<comment type="domain">
    <text evidence="2">The HXXXXD motif is essential for acyltransferase activity and contributes to the binding of the cysteamine moiety of the acyl-CoA and the phosphate moiety of the glycerol-3-phosphate.</text>
</comment>
<comment type="similarity">
    <text evidence="6">Belongs to the GPAT/DAPAT family.</text>
</comment>
<comment type="sequence caution" evidence="6">
    <conflict type="erroneous initiation">
        <sequence resource="EMBL-CDS" id="AAB39470"/>
    </conflict>
</comment>
<protein>
    <recommendedName>
        <fullName evidence="6">Glycerol-3-phosphate acyltransferase 1, mitochondrial</fullName>
        <shortName>GPAT-1</shortName>
        <ecNumber evidence="3">2.3.1.15</ecNumber>
    </recommendedName>
</protein>
<name>GPAT1_RAT</name>